<name>DCUP_PARC0</name>
<reference key="1">
    <citation type="submission" date="2006-12" db="EMBL/GenBank/DDBJ databases">
        <title>Complete sequence of Acidovorax avenae subsp. citrulli AAC00-1.</title>
        <authorList>
            <person name="Copeland A."/>
            <person name="Lucas S."/>
            <person name="Lapidus A."/>
            <person name="Barry K."/>
            <person name="Detter J.C."/>
            <person name="Glavina del Rio T."/>
            <person name="Dalin E."/>
            <person name="Tice H."/>
            <person name="Pitluck S."/>
            <person name="Kiss H."/>
            <person name="Brettin T."/>
            <person name="Bruce D."/>
            <person name="Han C."/>
            <person name="Tapia R."/>
            <person name="Gilna P."/>
            <person name="Schmutz J."/>
            <person name="Larimer F."/>
            <person name="Land M."/>
            <person name="Hauser L."/>
            <person name="Kyrpides N."/>
            <person name="Kim E."/>
            <person name="Stahl D."/>
            <person name="Richardson P."/>
        </authorList>
    </citation>
    <scope>NUCLEOTIDE SEQUENCE [LARGE SCALE GENOMIC DNA]</scope>
    <source>
        <strain>AAC00-1</strain>
    </source>
</reference>
<feature type="chain" id="PRO_0000325619" description="Uroporphyrinogen decarboxylase">
    <location>
        <begin position="1"/>
        <end position="376"/>
    </location>
</feature>
<feature type="binding site" evidence="1">
    <location>
        <begin position="29"/>
        <end position="33"/>
    </location>
    <ligand>
        <name>substrate</name>
    </ligand>
</feature>
<feature type="binding site" evidence="1">
    <location>
        <position position="79"/>
    </location>
    <ligand>
        <name>substrate</name>
    </ligand>
</feature>
<feature type="binding site" evidence="1">
    <location>
        <position position="155"/>
    </location>
    <ligand>
        <name>substrate</name>
    </ligand>
</feature>
<feature type="binding site" evidence="1">
    <location>
        <position position="210"/>
    </location>
    <ligand>
        <name>substrate</name>
    </ligand>
</feature>
<feature type="binding site" evidence="1">
    <location>
        <position position="342"/>
    </location>
    <ligand>
        <name>substrate</name>
    </ligand>
</feature>
<feature type="site" description="Transition state stabilizer" evidence="1">
    <location>
        <position position="79"/>
    </location>
</feature>
<organism>
    <name type="scientific">Paracidovorax citrulli (strain AAC00-1)</name>
    <name type="common">Acidovorax citrulli</name>
    <dbReference type="NCBI Taxonomy" id="397945"/>
    <lineage>
        <taxon>Bacteria</taxon>
        <taxon>Pseudomonadati</taxon>
        <taxon>Pseudomonadota</taxon>
        <taxon>Betaproteobacteria</taxon>
        <taxon>Burkholderiales</taxon>
        <taxon>Comamonadaceae</taxon>
        <taxon>Paracidovorax</taxon>
    </lineage>
</organism>
<evidence type="ECO:0000255" key="1">
    <source>
        <dbReference type="HAMAP-Rule" id="MF_00218"/>
    </source>
</evidence>
<evidence type="ECO:0000305" key="2"/>
<accession>A1TVM0</accession>
<keyword id="KW-0963">Cytoplasm</keyword>
<keyword id="KW-0210">Decarboxylase</keyword>
<keyword id="KW-0456">Lyase</keyword>
<keyword id="KW-0627">Porphyrin biosynthesis</keyword>
<sequence length="376" mass="40416">MSFAPLQNDTFLRACRRQATDYTPLWLMRQAGRYLPEYKATRARAGSFMGLATNVDYATEVTLQPLERFPLDAAILFSDILTVPDAMGLGLSFAEGEGPRFARVVRDEAAVAELAVPDMEKLRYVFDAVTSIRRALDGRVPLIGFSGSPWTLACYMVEGSGSDDYRLVKTLMYSRPDLMHRILAINADAVAAYLNAQIDAGAQAVMVFDSWGGVLADGAFQEFSLAYTTRVLAQLKRTGVDGTDVPRIVFTKGGALWLEDMKGLDCEVLGLDWTANLARARALVGGAVGGPGKALQGNIDPNVLFAPPEAIAAQARAVLDRFGAPHTDRGTTGPTHIFNLGHGISQHTPPEHVAALVEAVHGHSRAMRAAAGTGRA</sequence>
<dbReference type="EC" id="4.1.1.37" evidence="1"/>
<dbReference type="EMBL" id="CP000512">
    <property type="protein sequence ID" value="ABM35008.1"/>
    <property type="status" value="ALT_INIT"/>
    <property type="molecule type" value="Genomic_DNA"/>
</dbReference>
<dbReference type="RefSeq" id="WP_041827623.1">
    <property type="nucleotide sequence ID" value="NC_008752.1"/>
</dbReference>
<dbReference type="SMR" id="A1TVM0"/>
<dbReference type="STRING" id="397945.Aave_4469"/>
<dbReference type="GeneID" id="79789449"/>
<dbReference type="KEGG" id="aav:Aave_4469"/>
<dbReference type="eggNOG" id="COG0407">
    <property type="taxonomic scope" value="Bacteria"/>
</dbReference>
<dbReference type="HOGENOM" id="CLU_040933_0_0_4"/>
<dbReference type="OrthoDB" id="9806656at2"/>
<dbReference type="UniPathway" id="UPA00251">
    <property type="reaction ID" value="UER00321"/>
</dbReference>
<dbReference type="Proteomes" id="UP000002596">
    <property type="component" value="Chromosome"/>
</dbReference>
<dbReference type="GO" id="GO:0005829">
    <property type="term" value="C:cytosol"/>
    <property type="evidence" value="ECO:0007669"/>
    <property type="project" value="TreeGrafter"/>
</dbReference>
<dbReference type="GO" id="GO:0004853">
    <property type="term" value="F:uroporphyrinogen decarboxylase activity"/>
    <property type="evidence" value="ECO:0007669"/>
    <property type="project" value="UniProtKB-UniRule"/>
</dbReference>
<dbReference type="GO" id="GO:0019353">
    <property type="term" value="P:protoporphyrinogen IX biosynthetic process from glutamate"/>
    <property type="evidence" value="ECO:0007669"/>
    <property type="project" value="TreeGrafter"/>
</dbReference>
<dbReference type="CDD" id="cd00717">
    <property type="entry name" value="URO-D"/>
    <property type="match status" value="1"/>
</dbReference>
<dbReference type="FunFam" id="3.20.20.210:FF:000001">
    <property type="entry name" value="Uroporphyrinogen decarboxylase"/>
    <property type="match status" value="1"/>
</dbReference>
<dbReference type="Gene3D" id="3.20.20.210">
    <property type="match status" value="1"/>
</dbReference>
<dbReference type="HAMAP" id="MF_00218">
    <property type="entry name" value="URO_D"/>
    <property type="match status" value="1"/>
</dbReference>
<dbReference type="InterPro" id="IPR038071">
    <property type="entry name" value="UROD/MetE-like_sf"/>
</dbReference>
<dbReference type="InterPro" id="IPR006361">
    <property type="entry name" value="Uroporphyrinogen_deCO2ase_HemE"/>
</dbReference>
<dbReference type="InterPro" id="IPR000257">
    <property type="entry name" value="Uroporphyrinogen_deCOase"/>
</dbReference>
<dbReference type="NCBIfam" id="TIGR01464">
    <property type="entry name" value="hemE"/>
    <property type="match status" value="1"/>
</dbReference>
<dbReference type="PANTHER" id="PTHR21091">
    <property type="entry name" value="METHYLTETRAHYDROFOLATE:HOMOCYSTEINE METHYLTRANSFERASE RELATED"/>
    <property type="match status" value="1"/>
</dbReference>
<dbReference type="PANTHER" id="PTHR21091:SF169">
    <property type="entry name" value="UROPORPHYRINOGEN DECARBOXYLASE"/>
    <property type="match status" value="1"/>
</dbReference>
<dbReference type="Pfam" id="PF01208">
    <property type="entry name" value="URO-D"/>
    <property type="match status" value="1"/>
</dbReference>
<dbReference type="SUPFAM" id="SSF51726">
    <property type="entry name" value="UROD/MetE-like"/>
    <property type="match status" value="1"/>
</dbReference>
<dbReference type="PROSITE" id="PS00906">
    <property type="entry name" value="UROD_1"/>
    <property type="match status" value="1"/>
</dbReference>
<dbReference type="PROSITE" id="PS00907">
    <property type="entry name" value="UROD_2"/>
    <property type="match status" value="1"/>
</dbReference>
<comment type="function">
    <text evidence="1">Catalyzes the decarboxylation of four acetate groups of uroporphyrinogen-III to yield coproporphyrinogen-III.</text>
</comment>
<comment type="catalytic activity">
    <reaction evidence="1">
        <text>uroporphyrinogen III + 4 H(+) = coproporphyrinogen III + 4 CO2</text>
        <dbReference type="Rhea" id="RHEA:19865"/>
        <dbReference type="ChEBI" id="CHEBI:15378"/>
        <dbReference type="ChEBI" id="CHEBI:16526"/>
        <dbReference type="ChEBI" id="CHEBI:57308"/>
        <dbReference type="ChEBI" id="CHEBI:57309"/>
        <dbReference type="EC" id="4.1.1.37"/>
    </reaction>
</comment>
<comment type="pathway">
    <text evidence="1">Porphyrin-containing compound metabolism; protoporphyrin-IX biosynthesis; coproporphyrinogen-III from 5-aminolevulinate: step 4/4.</text>
</comment>
<comment type="subunit">
    <text evidence="1">Homodimer.</text>
</comment>
<comment type="subcellular location">
    <subcellularLocation>
        <location evidence="1">Cytoplasm</location>
    </subcellularLocation>
</comment>
<comment type="similarity">
    <text evidence="1">Belongs to the uroporphyrinogen decarboxylase family.</text>
</comment>
<comment type="sequence caution" evidence="2">
    <conflict type="erroneous initiation">
        <sequence resource="EMBL-CDS" id="ABM35008"/>
    </conflict>
</comment>
<protein>
    <recommendedName>
        <fullName evidence="1">Uroporphyrinogen decarboxylase</fullName>
        <shortName evidence="1">UPD</shortName>
        <shortName evidence="1">URO-D</shortName>
        <ecNumber evidence="1">4.1.1.37</ecNumber>
    </recommendedName>
</protein>
<gene>
    <name evidence="1" type="primary">hemE</name>
    <name type="ordered locus">Aave_4469</name>
</gene>
<proteinExistence type="inferred from homology"/>